<sequence length="224" mass="24195">MAAQNKAMSGNRMLVFVPPHPLIKHWVSVLRNEQTPCPIFRNAMSELGRLLMYEASRDWLPIITGEIQSPMGVASVEFVDPREPVAIVPILRAGLALAEHASSILPATKTYHLGISRNEETLQPSVYLNKLPDKFPEGSRVIVVDPMLATGGTIVAAIDLIKERGVDNSQIKVICAVGAPPALQKLSEKFPGLHVYAGILDPTVNDKGFIIPGLGDAGDRSFGT</sequence>
<reference key="1">
    <citation type="submission" date="1997-02" db="EMBL/GenBank/DDBJ databases">
        <title>Uracil phosphoribosyltransferase protein of Nicotiana tabacum.</title>
        <authorList>
            <person name="Shen W.H."/>
            <person name="Gigot C."/>
        </authorList>
    </citation>
    <scope>NUCLEOTIDE SEQUENCE [MRNA]</scope>
    <source>
        <strain>cv. Bright Yellow 2</strain>
    </source>
</reference>
<organism>
    <name type="scientific">Nicotiana tabacum</name>
    <name type="common">Common tobacco</name>
    <dbReference type="NCBI Taxonomy" id="4097"/>
    <lineage>
        <taxon>Eukaryota</taxon>
        <taxon>Viridiplantae</taxon>
        <taxon>Streptophyta</taxon>
        <taxon>Embryophyta</taxon>
        <taxon>Tracheophyta</taxon>
        <taxon>Spermatophyta</taxon>
        <taxon>Magnoliopsida</taxon>
        <taxon>eudicotyledons</taxon>
        <taxon>Gunneridae</taxon>
        <taxon>Pentapetalae</taxon>
        <taxon>asterids</taxon>
        <taxon>lamiids</taxon>
        <taxon>Solanales</taxon>
        <taxon>Solanaceae</taxon>
        <taxon>Nicotianoideae</taxon>
        <taxon>Nicotianeae</taxon>
        <taxon>Nicotiana</taxon>
    </lineage>
</organism>
<gene>
    <name type="primary">UPP</name>
</gene>
<comment type="function">
    <text evidence="1">Catalyzes the conversion of uracil and 5-phospho-alpha-D-ribose 1-diphosphate (PRPP) to UMP and diphosphate.</text>
</comment>
<comment type="catalytic activity">
    <reaction>
        <text>UMP + diphosphate = 5-phospho-alpha-D-ribose 1-diphosphate + uracil</text>
        <dbReference type="Rhea" id="RHEA:13017"/>
        <dbReference type="ChEBI" id="CHEBI:17568"/>
        <dbReference type="ChEBI" id="CHEBI:33019"/>
        <dbReference type="ChEBI" id="CHEBI:57865"/>
        <dbReference type="ChEBI" id="CHEBI:58017"/>
        <dbReference type="EC" id="2.4.2.9"/>
    </reaction>
</comment>
<comment type="cofactor">
    <cofactor evidence="1">
        <name>Mg(2+)</name>
        <dbReference type="ChEBI" id="CHEBI:18420"/>
    </cofactor>
    <text evidence="1">Binds 1 Mg(2+) ion per subunit. The magnesium is bound as Mg-PRPP.</text>
</comment>
<comment type="activity regulation">
    <text evidence="1">Allosterically activated by GTP.</text>
</comment>
<comment type="pathway">
    <text>Pyrimidine metabolism; UMP biosynthesis via salvage pathway; UMP from uracil: step 1/1.</text>
</comment>
<comment type="similarity">
    <text evidence="2">Belongs to the UPRTase family.</text>
</comment>
<feature type="chain" id="PRO_0000120785" description="Uracil phosphoribosyltransferase">
    <location>
        <begin position="1"/>
        <end position="224"/>
    </location>
</feature>
<feature type="binding site" evidence="1">
    <location>
        <position position="92"/>
    </location>
    <ligand>
        <name>5-phospho-alpha-D-ribose 1-diphosphate</name>
        <dbReference type="ChEBI" id="CHEBI:58017"/>
    </ligand>
</feature>
<feature type="binding site" evidence="1">
    <location>
        <position position="109"/>
    </location>
    <ligand>
        <name>GTP</name>
        <dbReference type="ChEBI" id="CHEBI:37565"/>
    </ligand>
</feature>
<feature type="binding site" evidence="1">
    <location>
        <position position="117"/>
    </location>
    <ligand>
        <name>5-phospho-alpha-D-ribose 1-diphosphate</name>
        <dbReference type="ChEBI" id="CHEBI:58017"/>
    </ligand>
</feature>
<feature type="binding site" evidence="1">
    <location>
        <begin position="145"/>
        <end position="153"/>
    </location>
    <ligand>
        <name>5-phospho-alpha-D-ribose 1-diphosphate</name>
        <dbReference type="ChEBI" id="CHEBI:58017"/>
    </ligand>
</feature>
<feature type="binding site" evidence="1">
    <location>
        <position position="210"/>
    </location>
    <ligand>
        <name>uracil</name>
        <dbReference type="ChEBI" id="CHEBI:17568"/>
    </ligand>
</feature>
<feature type="binding site" evidence="1">
    <location>
        <begin position="215"/>
        <end position="217"/>
    </location>
    <ligand>
        <name>uracil</name>
        <dbReference type="ChEBI" id="CHEBI:17568"/>
    </ligand>
</feature>
<feature type="binding site" evidence="1">
    <location>
        <position position="216"/>
    </location>
    <ligand>
        <name>5-phospho-alpha-D-ribose 1-diphosphate</name>
        <dbReference type="ChEBI" id="CHEBI:58017"/>
    </ligand>
</feature>
<evidence type="ECO:0000250" key="1"/>
<evidence type="ECO:0000305" key="2"/>
<protein>
    <recommendedName>
        <fullName>Uracil phosphoribosyltransferase</fullName>
        <shortName>UPRTase</shortName>
        <ecNumber>2.4.2.9</ecNumber>
    </recommendedName>
    <alternativeName>
        <fullName>UMP pyrophosphorylase</fullName>
    </alternativeName>
</protein>
<proteinExistence type="evidence at transcript level"/>
<accession>P93394</accession>
<dbReference type="EC" id="2.4.2.9"/>
<dbReference type="EMBL" id="Y11210">
    <property type="protein sequence ID" value="CAA72093.1"/>
    <property type="molecule type" value="mRNA"/>
</dbReference>
<dbReference type="PIR" id="T03969">
    <property type="entry name" value="T03969"/>
</dbReference>
<dbReference type="SMR" id="P93394"/>
<dbReference type="STRING" id="4097.P93394"/>
<dbReference type="PaxDb" id="4097-P93394"/>
<dbReference type="ProMEX" id="P93394"/>
<dbReference type="UniPathway" id="UPA00574">
    <property type="reaction ID" value="UER00636"/>
</dbReference>
<dbReference type="Proteomes" id="UP000084051">
    <property type="component" value="Unplaced"/>
</dbReference>
<dbReference type="GO" id="GO:0005737">
    <property type="term" value="C:cytoplasm"/>
    <property type="evidence" value="ECO:0000318"/>
    <property type="project" value="GO_Central"/>
</dbReference>
<dbReference type="GO" id="GO:0005525">
    <property type="term" value="F:GTP binding"/>
    <property type="evidence" value="ECO:0007669"/>
    <property type="project" value="UniProtKB-KW"/>
</dbReference>
<dbReference type="GO" id="GO:0004845">
    <property type="term" value="F:uracil phosphoribosyltransferase activity"/>
    <property type="evidence" value="ECO:0000318"/>
    <property type="project" value="GO_Central"/>
</dbReference>
<dbReference type="GO" id="GO:0044206">
    <property type="term" value="P:UMP salvage"/>
    <property type="evidence" value="ECO:0007669"/>
    <property type="project" value="UniProtKB-UniPathway"/>
</dbReference>
<dbReference type="GO" id="GO:0006223">
    <property type="term" value="P:uracil salvage"/>
    <property type="evidence" value="ECO:0007669"/>
    <property type="project" value="InterPro"/>
</dbReference>
<dbReference type="CDD" id="cd06223">
    <property type="entry name" value="PRTases_typeI"/>
    <property type="match status" value="1"/>
</dbReference>
<dbReference type="FunFam" id="3.40.50.2020:FF:000003">
    <property type="entry name" value="Uracil phosphoribosyltransferase"/>
    <property type="match status" value="1"/>
</dbReference>
<dbReference type="Gene3D" id="3.40.50.2020">
    <property type="match status" value="1"/>
</dbReference>
<dbReference type="InterPro" id="IPR000836">
    <property type="entry name" value="PRibTrfase_dom"/>
</dbReference>
<dbReference type="InterPro" id="IPR029057">
    <property type="entry name" value="PRTase-like"/>
</dbReference>
<dbReference type="InterPro" id="IPR050054">
    <property type="entry name" value="UPRTase/APRTase"/>
</dbReference>
<dbReference type="InterPro" id="IPR005765">
    <property type="entry name" value="Ura_phspho_trans"/>
</dbReference>
<dbReference type="NCBIfam" id="NF001097">
    <property type="entry name" value="PRK00129.1"/>
    <property type="match status" value="1"/>
</dbReference>
<dbReference type="NCBIfam" id="TIGR01091">
    <property type="entry name" value="upp"/>
    <property type="match status" value="1"/>
</dbReference>
<dbReference type="PANTHER" id="PTHR32315">
    <property type="entry name" value="ADENINE PHOSPHORIBOSYLTRANSFERASE"/>
    <property type="match status" value="1"/>
</dbReference>
<dbReference type="PANTHER" id="PTHR32315:SF4">
    <property type="entry name" value="URACIL PHOSPHORIBOSYLTRANSFERASE, CHLOROPLASTIC"/>
    <property type="match status" value="1"/>
</dbReference>
<dbReference type="Pfam" id="PF14681">
    <property type="entry name" value="UPRTase"/>
    <property type="match status" value="1"/>
</dbReference>
<dbReference type="SUPFAM" id="SSF53271">
    <property type="entry name" value="PRTase-like"/>
    <property type="match status" value="1"/>
</dbReference>
<name>UPP_TOBAC</name>
<keyword id="KW-0021">Allosteric enzyme</keyword>
<keyword id="KW-0328">Glycosyltransferase</keyword>
<keyword id="KW-0342">GTP-binding</keyword>
<keyword id="KW-0547">Nucleotide-binding</keyword>
<keyword id="KW-1185">Reference proteome</keyword>
<keyword id="KW-0808">Transferase</keyword>